<protein>
    <recommendedName>
        <fullName>Uncharacterized protein MJ0778</fullName>
    </recommendedName>
</protein>
<accession>Q58188</accession>
<feature type="chain" id="PRO_0000107029" description="Uncharacterized protein MJ0778">
    <location>
        <begin position="1"/>
        <end position="169"/>
    </location>
</feature>
<feature type="domain" description="HD" evidence="1">
    <location>
        <begin position="18"/>
        <end position="130"/>
    </location>
</feature>
<organism>
    <name type="scientific">Methanocaldococcus jannaschii (strain ATCC 43067 / DSM 2661 / JAL-1 / JCM 10045 / NBRC 100440)</name>
    <name type="common">Methanococcus jannaschii</name>
    <dbReference type="NCBI Taxonomy" id="243232"/>
    <lineage>
        <taxon>Archaea</taxon>
        <taxon>Methanobacteriati</taxon>
        <taxon>Methanobacteriota</taxon>
        <taxon>Methanomada group</taxon>
        <taxon>Methanococci</taxon>
        <taxon>Methanococcales</taxon>
        <taxon>Methanocaldococcaceae</taxon>
        <taxon>Methanocaldococcus</taxon>
    </lineage>
</organism>
<keyword id="KW-1185">Reference proteome</keyword>
<evidence type="ECO:0000255" key="1">
    <source>
        <dbReference type="PROSITE-ProRule" id="PRU01175"/>
    </source>
</evidence>
<proteinExistence type="predicted"/>
<sequence>MEFEKALSILKNLCSENVVEHCLAVSEYAYELALAIKNKGYEVDVELVRLGGLLHDIGRSRTHGIEHGVVGAEILRELGFDEKLALIAERHIGAGITKEEAIELGLPPKDYLPITLEEKIVAHADNLIFGTKRVEIDDVIKKFEKRLGKNHPSIKRIILLNDEINNLLK</sequence>
<gene>
    <name type="ordered locus">MJ0778</name>
</gene>
<name>Y778_METJA</name>
<dbReference type="EMBL" id="L77117">
    <property type="protein sequence ID" value="AAB98768.1"/>
    <property type="molecule type" value="Genomic_DNA"/>
</dbReference>
<dbReference type="PIR" id="B64397">
    <property type="entry name" value="B64397"/>
</dbReference>
<dbReference type="RefSeq" id="WP_010870283.1">
    <property type="nucleotide sequence ID" value="NC_000909.1"/>
</dbReference>
<dbReference type="SMR" id="Q58188"/>
<dbReference type="STRING" id="243232.MJ_0778"/>
<dbReference type="PaxDb" id="243232-MJ_0778"/>
<dbReference type="DNASU" id="1451655"/>
<dbReference type="EnsemblBacteria" id="AAB98768">
    <property type="protein sequence ID" value="AAB98768"/>
    <property type="gene ID" value="MJ_0778"/>
</dbReference>
<dbReference type="GeneID" id="1451655"/>
<dbReference type="KEGG" id="mja:MJ_0778"/>
<dbReference type="eggNOG" id="arCOG01858">
    <property type="taxonomic scope" value="Archaea"/>
</dbReference>
<dbReference type="HOGENOM" id="CLU_073842_1_0_2"/>
<dbReference type="InParanoid" id="Q58188"/>
<dbReference type="OrthoDB" id="52832at2157"/>
<dbReference type="PhylomeDB" id="Q58188"/>
<dbReference type="Proteomes" id="UP000000805">
    <property type="component" value="Chromosome"/>
</dbReference>
<dbReference type="CDD" id="cd00077">
    <property type="entry name" value="HDc"/>
    <property type="match status" value="1"/>
</dbReference>
<dbReference type="Gene3D" id="1.10.3210.10">
    <property type="entry name" value="Hypothetical protein af1432"/>
    <property type="match status" value="1"/>
</dbReference>
<dbReference type="InterPro" id="IPR004454">
    <property type="entry name" value="HD-related"/>
</dbReference>
<dbReference type="InterPro" id="IPR003607">
    <property type="entry name" value="HD/PDEase_dom"/>
</dbReference>
<dbReference type="InterPro" id="IPR006674">
    <property type="entry name" value="HD_domain"/>
</dbReference>
<dbReference type="InterPro" id="IPR006675">
    <property type="entry name" value="HDIG_dom"/>
</dbReference>
<dbReference type="NCBIfam" id="TIGR00277">
    <property type="entry name" value="HDIG"/>
    <property type="match status" value="1"/>
</dbReference>
<dbReference type="NCBIfam" id="TIGR00295">
    <property type="entry name" value="TIGR00295 family protein"/>
    <property type="match status" value="1"/>
</dbReference>
<dbReference type="PANTHER" id="PTHR38659:SF2">
    <property type="entry name" value="HDIG DOMAIN PROTEIN"/>
    <property type="match status" value="1"/>
</dbReference>
<dbReference type="PANTHER" id="PTHR38659">
    <property type="entry name" value="METAL-DEPENDENT PHOSPHOHYDROLASE"/>
    <property type="match status" value="1"/>
</dbReference>
<dbReference type="Pfam" id="PF01966">
    <property type="entry name" value="HD"/>
    <property type="match status" value="1"/>
</dbReference>
<dbReference type="SMART" id="SM00471">
    <property type="entry name" value="HDc"/>
    <property type="match status" value="1"/>
</dbReference>
<dbReference type="SUPFAM" id="SSF109604">
    <property type="entry name" value="HD-domain/PDEase-like"/>
    <property type="match status" value="1"/>
</dbReference>
<dbReference type="PROSITE" id="PS51831">
    <property type="entry name" value="HD"/>
    <property type="match status" value="1"/>
</dbReference>
<reference key="1">
    <citation type="journal article" date="1996" name="Science">
        <title>Complete genome sequence of the methanogenic archaeon, Methanococcus jannaschii.</title>
        <authorList>
            <person name="Bult C.J."/>
            <person name="White O."/>
            <person name="Olsen G.J."/>
            <person name="Zhou L."/>
            <person name="Fleischmann R.D."/>
            <person name="Sutton G.G."/>
            <person name="Blake J.A."/>
            <person name="FitzGerald L.M."/>
            <person name="Clayton R.A."/>
            <person name="Gocayne J.D."/>
            <person name="Kerlavage A.R."/>
            <person name="Dougherty B.A."/>
            <person name="Tomb J.-F."/>
            <person name="Adams M.D."/>
            <person name="Reich C.I."/>
            <person name="Overbeek R."/>
            <person name="Kirkness E.F."/>
            <person name="Weinstock K.G."/>
            <person name="Merrick J.M."/>
            <person name="Glodek A."/>
            <person name="Scott J.L."/>
            <person name="Geoghagen N.S.M."/>
            <person name="Weidman J.F."/>
            <person name="Fuhrmann J.L."/>
            <person name="Nguyen D."/>
            <person name="Utterback T.R."/>
            <person name="Kelley J.M."/>
            <person name="Peterson J.D."/>
            <person name="Sadow P.W."/>
            <person name="Hanna M.C."/>
            <person name="Cotton M.D."/>
            <person name="Roberts K.M."/>
            <person name="Hurst M.A."/>
            <person name="Kaine B.P."/>
            <person name="Borodovsky M."/>
            <person name="Klenk H.-P."/>
            <person name="Fraser C.M."/>
            <person name="Smith H.O."/>
            <person name="Woese C.R."/>
            <person name="Venter J.C."/>
        </authorList>
    </citation>
    <scope>NUCLEOTIDE SEQUENCE [LARGE SCALE GENOMIC DNA]</scope>
    <source>
        <strain>ATCC 43067 / DSM 2661 / JAL-1 / JCM 10045 / NBRC 100440</strain>
    </source>
</reference>